<evidence type="ECO:0000250" key="1">
    <source>
        <dbReference type="UniProtKB" id="P33187"/>
    </source>
</evidence>
<evidence type="ECO:0000269" key="2">
    <source>
    </source>
</evidence>
<evidence type="ECO:0000305" key="3"/>
<comment type="function">
    <text>The metallothioneins are involved in the cellular sequestration of toxic metal ions.</text>
</comment>
<comment type="subunit">
    <text>Homodimer.</text>
</comment>
<comment type="induction">
    <text>By cadmium.</text>
</comment>
<comment type="similarity">
    <text evidence="3">Belongs to the metallothionein superfamily. Type 2 family.</text>
</comment>
<name>MT23A_MYTED</name>
<proteinExistence type="evidence at protein level"/>
<dbReference type="PIR" id="S39422">
    <property type="entry name" value="S39422"/>
</dbReference>
<dbReference type="GO" id="GO:0046872">
    <property type="term" value="F:metal ion binding"/>
    <property type="evidence" value="ECO:0007669"/>
    <property type="project" value="UniProtKB-KW"/>
</dbReference>
<dbReference type="InterPro" id="IPR001008">
    <property type="entry name" value="Metalthion_mollusc"/>
</dbReference>
<dbReference type="PRINTS" id="PR00875">
    <property type="entry name" value="MTMOLLUSC"/>
</dbReference>
<protein>
    <recommendedName>
        <fullName>Metallothionein 20-III isoform A</fullName>
        <shortName>MT-20-IIIA</shortName>
    </recommendedName>
</protein>
<sequence length="72" mass="7030">MPGPCNCIETNVCICGTGCSGKCCQCGDACKCASGCGCSGCKVVCRCSGTCACGCDCTGPINCKCESGCSCK</sequence>
<reference key="1">
    <citation type="journal article" date="1993" name="Eur. J. Biochem.">
        <title>Complete amino acid sequences of five dimeric and four monomeric forms of metallothionein from the edible mussel Mytilus edulis.</title>
        <authorList>
            <person name="Mackay E.A."/>
            <person name="Overnell J."/>
            <person name="Dunbar B."/>
            <person name="Davidson I."/>
            <person name="Hunziker P.E."/>
            <person name="Kaegi J.H.R."/>
            <person name="Fothergill J.E."/>
        </authorList>
    </citation>
    <scope>PROTEIN SEQUENCE OF 2-72</scope>
</reference>
<accession>P69153</accession>
<accession>P80253</accession>
<accession>Q9GU31</accession>
<feature type="initiator methionine" description="Removed" evidence="2">
    <location>
        <position position="1"/>
    </location>
</feature>
<feature type="chain" id="PRO_0000197331" description="Metallothionein 20-III isoform A">
    <location>
        <begin position="2"/>
        <end position="72"/>
    </location>
</feature>
<feature type="binding site" evidence="1">
    <location>
        <position position="15"/>
    </location>
    <ligand>
        <name>Cd(2+)</name>
        <dbReference type="ChEBI" id="CHEBI:48775"/>
        <label>1</label>
    </ligand>
</feature>
<feature type="binding site" evidence="1">
    <location>
        <position position="19"/>
    </location>
    <ligand>
        <name>Cd(2+)</name>
        <dbReference type="ChEBI" id="CHEBI:48775"/>
        <label>1</label>
    </ligand>
</feature>
<feature type="binding site" evidence="1">
    <location>
        <position position="19"/>
    </location>
    <ligand>
        <name>Cd(2+)</name>
        <dbReference type="ChEBI" id="CHEBI:48775"/>
        <label>2</label>
    </ligand>
</feature>
<feature type="binding site" evidence="1">
    <location>
        <position position="24"/>
    </location>
    <ligand>
        <name>Cd(2+)</name>
        <dbReference type="ChEBI" id="CHEBI:48775"/>
        <label>2</label>
    </ligand>
</feature>
<feature type="binding site" evidence="1">
    <location>
        <position position="26"/>
    </location>
    <ligand>
        <name>Cd(2+)</name>
        <dbReference type="ChEBI" id="CHEBI:48775"/>
        <label>3</label>
    </ligand>
</feature>
<feature type="binding site" evidence="1">
    <location>
        <position position="30"/>
    </location>
    <ligand>
        <name>Cd(2+)</name>
        <dbReference type="ChEBI" id="CHEBI:48775"/>
        <label>3</label>
    </ligand>
</feature>
<feature type="binding site" evidence="1">
    <location>
        <position position="32"/>
    </location>
    <ligand>
        <name>Cd(2+)</name>
        <dbReference type="ChEBI" id="CHEBI:48775"/>
        <label>1</label>
    </ligand>
</feature>
<feature type="binding site" evidence="1">
    <location>
        <position position="32"/>
    </location>
    <ligand>
        <name>Cd(2+)</name>
        <dbReference type="ChEBI" id="CHEBI:48775"/>
        <label>3</label>
    </ligand>
</feature>
<feature type="binding site" evidence="1">
    <location>
        <position position="36"/>
    </location>
    <ligand>
        <name>Cd(2+)</name>
        <dbReference type="ChEBI" id="CHEBI:48775"/>
        <label>1</label>
    </ligand>
</feature>
<feature type="binding site" evidence="1">
    <location>
        <position position="38"/>
    </location>
    <ligand>
        <name>Cd(2+)</name>
        <dbReference type="ChEBI" id="CHEBI:48775"/>
        <label>2</label>
    </ligand>
</feature>
<feature type="binding site" evidence="1">
    <location>
        <position position="41"/>
    </location>
    <ligand>
        <name>Cd(2+)</name>
        <dbReference type="ChEBI" id="CHEBI:48775"/>
        <label>2</label>
    </ligand>
</feature>
<feature type="binding site" evidence="1">
    <location>
        <position position="41"/>
    </location>
    <ligand>
        <name>Cd(2+)</name>
        <dbReference type="ChEBI" id="CHEBI:48775"/>
        <label>3</label>
    </ligand>
</feature>
<feature type="binding site" evidence="1">
    <location>
        <position position="45"/>
    </location>
    <ligand>
        <name>Cd(2+)</name>
        <dbReference type="ChEBI" id="CHEBI:48775"/>
        <label>4</label>
    </ligand>
</feature>
<feature type="binding site" evidence="1">
    <location>
        <position position="47"/>
    </location>
    <ligand>
        <name>Cd(2+)</name>
        <dbReference type="ChEBI" id="CHEBI:48775"/>
        <label>5</label>
    </ligand>
</feature>
<feature type="binding site" evidence="1">
    <location>
        <position position="51"/>
    </location>
    <ligand>
        <name>Cd(2+)</name>
        <dbReference type="ChEBI" id="CHEBI:48775"/>
        <label>5</label>
    </ligand>
</feature>
<feature type="binding site" evidence="1">
    <location>
        <position position="53"/>
    </location>
    <ligand>
        <name>Cd(2+)</name>
        <dbReference type="ChEBI" id="CHEBI:48775"/>
        <label>5</label>
    </ligand>
</feature>
<feature type="binding site" evidence="1">
    <location>
        <position position="53"/>
    </location>
    <ligand>
        <name>Cd(2+)</name>
        <dbReference type="ChEBI" id="CHEBI:48775"/>
        <label>6</label>
    </ligand>
</feature>
<feature type="binding site" evidence="1">
    <location>
        <position position="57"/>
    </location>
    <ligand>
        <name>Cd(2+)</name>
        <dbReference type="ChEBI" id="CHEBI:48775"/>
        <label>4</label>
    </ligand>
</feature>
<feature type="binding site" evidence="1">
    <location>
        <position position="57"/>
    </location>
    <ligand>
        <name>Cd(2+)</name>
        <dbReference type="ChEBI" id="CHEBI:48775"/>
        <label>5</label>
    </ligand>
</feature>
<feature type="binding site" evidence="1">
    <location>
        <position position="63"/>
    </location>
    <ligand>
        <name>Cd(2+)</name>
        <dbReference type="ChEBI" id="CHEBI:48775"/>
        <label>4</label>
    </ligand>
</feature>
<feature type="binding site" evidence="1">
    <location>
        <position position="65"/>
    </location>
    <ligand>
        <name>Cd(2+)</name>
        <dbReference type="ChEBI" id="CHEBI:48775"/>
        <label>6</label>
    </ligand>
</feature>
<feature type="binding site" evidence="1">
    <location>
        <position position="69"/>
    </location>
    <ligand>
        <name>Cd(2+)</name>
        <dbReference type="ChEBI" id="CHEBI:48775"/>
        <label>6</label>
    </ligand>
</feature>
<feature type="binding site" evidence="1">
    <location>
        <position position="71"/>
    </location>
    <ligand>
        <name>Cd(2+)</name>
        <dbReference type="ChEBI" id="CHEBI:48775"/>
        <label>4</label>
    </ligand>
</feature>
<feature type="binding site" evidence="1">
    <location>
        <position position="71"/>
    </location>
    <ligand>
        <name>Cd(2+)</name>
        <dbReference type="ChEBI" id="CHEBI:48775"/>
        <label>6</label>
    </ligand>
</feature>
<keyword id="KW-0104">Cadmium</keyword>
<keyword id="KW-0903">Direct protein sequencing</keyword>
<keyword id="KW-0479">Metal-binding</keyword>
<keyword id="KW-0480">Metal-thiolate cluster</keyword>
<organism>
    <name type="scientific">Mytilus edulis</name>
    <name type="common">Blue mussel</name>
    <dbReference type="NCBI Taxonomy" id="6550"/>
    <lineage>
        <taxon>Eukaryota</taxon>
        <taxon>Metazoa</taxon>
        <taxon>Spiralia</taxon>
        <taxon>Lophotrochozoa</taxon>
        <taxon>Mollusca</taxon>
        <taxon>Bivalvia</taxon>
        <taxon>Autobranchia</taxon>
        <taxon>Pteriomorphia</taxon>
        <taxon>Mytilida</taxon>
        <taxon>Mytiloidea</taxon>
        <taxon>Mytilidae</taxon>
        <taxon>Mytilinae</taxon>
        <taxon>Mytilus</taxon>
    </lineage>
</organism>